<proteinExistence type="evidence at protein level"/>
<name>FND3A_HUMAN</name>
<gene>
    <name type="primary">FNDC3A</name>
    <name type="synonym">FNDC3</name>
    <name type="synonym">HUGO</name>
    <name type="synonym">KIAA0970</name>
</gene>
<comment type="function">
    <text evidence="1">Mediates spermatid-Sertoli adhesion during spermatogenesis.</text>
</comment>
<comment type="subcellular location">
    <subcellularLocation>
        <location evidence="11">Golgi apparatus membrane</location>
        <topology evidence="11">Single-pass membrane protein</topology>
    </subcellularLocation>
</comment>
<comment type="alternative products">
    <event type="alternative promoter"/>
    <isoform>
        <id>Q9Y2H6-1</id>
        <name>1</name>
        <name>HUGO1</name>
        <sequence type="displayed"/>
    </isoform>
    <isoform>
        <id>Q9Y2H6-2</id>
        <name>2</name>
        <name>HUGO2</name>
        <sequence type="described" ref="VSP_037723 VSP_037724"/>
    </isoform>
</comment>
<comment type="tissue specificity">
    <text evidence="6">Expressed in the odontoblast and nerves in the dental pulp. Also expressed in trachea and to a lesser extent in the brain, liver, lung and kidney.</text>
</comment>
<comment type="similarity">
    <text evidence="11">Belongs to the FNDC3 family.</text>
</comment>
<comment type="sequence caution" evidence="11">
    <conflict type="erroneous initiation">
        <sequence resource="EMBL-CDS" id="BAA76814"/>
    </conflict>
</comment>
<comment type="sequence caution" evidence="11">
    <conflict type="erroneous initiation">
        <sequence resource="EMBL-CDS" id="BAD18784"/>
    </conflict>
</comment>
<keyword id="KW-0002">3D-structure</keyword>
<keyword id="KW-0007">Acetylation</keyword>
<keyword id="KW-0877">Alternative promoter usage</keyword>
<keyword id="KW-0333">Golgi apparatus</keyword>
<keyword id="KW-0472">Membrane</keyword>
<keyword id="KW-0597">Phosphoprotein</keyword>
<keyword id="KW-1267">Proteomics identification</keyword>
<keyword id="KW-1185">Reference proteome</keyword>
<keyword id="KW-0677">Repeat</keyword>
<keyword id="KW-0812">Transmembrane</keyword>
<keyword id="KW-1133">Transmembrane helix</keyword>
<protein>
    <recommendedName>
        <fullName>Fibronectin type-III domain-containing protein 3A</fullName>
    </recommendedName>
    <alternativeName>
        <fullName>Human gene expressed in odontoblasts</fullName>
    </alternativeName>
</protein>
<dbReference type="EMBL" id="AJ749706">
    <property type="protein sequence ID" value="CAG44602.1"/>
    <property type="molecule type" value="mRNA"/>
</dbReference>
<dbReference type="EMBL" id="AJ749707">
    <property type="protein sequence ID" value="CAG44603.1"/>
    <property type="molecule type" value="mRNA"/>
</dbReference>
<dbReference type="EMBL" id="AB023187">
    <property type="protein sequence ID" value="BAA76814.2"/>
    <property type="status" value="ALT_INIT"/>
    <property type="molecule type" value="mRNA"/>
</dbReference>
<dbReference type="EMBL" id="AK172814">
    <property type="protein sequence ID" value="BAD18784.1"/>
    <property type="status" value="ALT_INIT"/>
    <property type="molecule type" value="mRNA"/>
</dbReference>
<dbReference type="EMBL" id="AK302415">
    <property type="protein sequence ID" value="BAG63723.1"/>
    <property type="molecule type" value="mRNA"/>
</dbReference>
<dbReference type="EMBL" id="BX640739">
    <property type="protein sequence ID" value="CAE45852.1"/>
    <property type="molecule type" value="mRNA"/>
</dbReference>
<dbReference type="EMBL" id="BX648141">
    <property type="protein sequence ID" value="CAI45989.1"/>
    <property type="molecule type" value="mRNA"/>
</dbReference>
<dbReference type="EMBL" id="AL161421">
    <property type="status" value="NOT_ANNOTATED_CDS"/>
    <property type="molecule type" value="Genomic_DNA"/>
</dbReference>
<dbReference type="EMBL" id="AL359184">
    <property type="status" value="NOT_ANNOTATED_CDS"/>
    <property type="molecule type" value="Genomic_DNA"/>
</dbReference>
<dbReference type="EMBL" id="AL137000">
    <property type="status" value="NOT_ANNOTATED_CDS"/>
    <property type="molecule type" value="Genomic_DNA"/>
</dbReference>
<dbReference type="EMBL" id="CH471075">
    <property type="protein sequence ID" value="EAX08804.1"/>
    <property type="molecule type" value="Genomic_DNA"/>
</dbReference>
<dbReference type="EMBL" id="CH471075">
    <property type="protein sequence ID" value="EAX08806.1"/>
    <property type="molecule type" value="Genomic_DNA"/>
</dbReference>
<dbReference type="EMBL" id="BC060816">
    <property type="protein sequence ID" value="AAH60816.1"/>
    <property type="molecule type" value="mRNA"/>
</dbReference>
<dbReference type="EMBL" id="BC070072">
    <property type="protein sequence ID" value="AAH70072.1"/>
    <property type="molecule type" value="mRNA"/>
</dbReference>
<dbReference type="EMBL" id="BC132812">
    <property type="protein sequence ID" value="AAI32813.1"/>
    <property type="molecule type" value="mRNA"/>
</dbReference>
<dbReference type="EMBL" id="BC136617">
    <property type="protein sequence ID" value="AAI36618.1"/>
    <property type="molecule type" value="mRNA"/>
</dbReference>
<dbReference type="EMBL" id="BC144301">
    <property type="protein sequence ID" value="AAI44302.1"/>
    <property type="molecule type" value="mRNA"/>
</dbReference>
<dbReference type="CCDS" id="CCDS41886.1">
    <molecule id="Q9Y2H6-1"/>
</dbReference>
<dbReference type="CCDS" id="CCDS9413.2">
    <molecule id="Q9Y2H6-2"/>
</dbReference>
<dbReference type="RefSeq" id="NP_001073141.1">
    <molecule id="Q9Y2H6-1"/>
    <property type="nucleotide sequence ID" value="NM_001079673.2"/>
</dbReference>
<dbReference type="RefSeq" id="NP_001265367.1">
    <molecule id="Q9Y2H6-1"/>
    <property type="nucleotide sequence ID" value="NM_001278438.2"/>
</dbReference>
<dbReference type="RefSeq" id="NP_055738.3">
    <molecule id="Q9Y2H6-2"/>
    <property type="nucleotide sequence ID" value="NM_014923.4"/>
</dbReference>
<dbReference type="RefSeq" id="XP_011533299.1">
    <property type="nucleotide sequence ID" value="XM_011534997.2"/>
</dbReference>
<dbReference type="RefSeq" id="XP_016875929.1">
    <molecule id="Q9Y2H6-1"/>
    <property type="nucleotide sequence ID" value="XM_017020440.3"/>
</dbReference>
<dbReference type="RefSeq" id="XP_016875930.1">
    <property type="nucleotide sequence ID" value="XM_017020441.1"/>
</dbReference>
<dbReference type="RefSeq" id="XP_016875931.1">
    <property type="nucleotide sequence ID" value="XM_017020442.1"/>
</dbReference>
<dbReference type="RefSeq" id="XP_054230218.1">
    <molecule id="Q9Y2H6-1"/>
    <property type="nucleotide sequence ID" value="XM_054374243.1"/>
</dbReference>
<dbReference type="PDB" id="1WK0">
    <property type="method" value="NMR"/>
    <property type="chains" value="A=256-379"/>
</dbReference>
<dbReference type="PDB" id="1X3D">
    <property type="method" value="NMR"/>
    <property type="chains" value="A=361-465"/>
</dbReference>
<dbReference type="PDB" id="1X4X">
    <property type="method" value="NMR"/>
    <property type="chains" value="A=759-851"/>
</dbReference>
<dbReference type="PDB" id="1X5X">
    <property type="method" value="NMR"/>
    <property type="chains" value="A=467-562"/>
</dbReference>
<dbReference type="PDB" id="2CRM">
    <property type="method" value="NMR"/>
    <property type="chains" value="A=554-660"/>
</dbReference>
<dbReference type="PDB" id="2CRZ">
    <property type="method" value="NMR"/>
    <property type="chains" value="A=661-757"/>
</dbReference>
<dbReference type="PDBsum" id="1WK0"/>
<dbReference type="PDBsum" id="1X3D"/>
<dbReference type="PDBsum" id="1X4X"/>
<dbReference type="PDBsum" id="1X5X"/>
<dbReference type="PDBsum" id="2CRM"/>
<dbReference type="PDBsum" id="2CRZ"/>
<dbReference type="BMRB" id="Q9Y2H6"/>
<dbReference type="SMR" id="Q9Y2H6"/>
<dbReference type="BioGRID" id="116530">
    <property type="interactions" value="310"/>
</dbReference>
<dbReference type="FunCoup" id="Q9Y2H6">
    <property type="interactions" value="4066"/>
</dbReference>
<dbReference type="IntAct" id="Q9Y2H6">
    <property type="interactions" value="80"/>
</dbReference>
<dbReference type="MINT" id="Q9Y2H6"/>
<dbReference type="STRING" id="9606.ENSP00000441831"/>
<dbReference type="GlyGen" id="Q9Y2H6">
    <property type="glycosylation" value="3 sites, 1 N-linked glycan (1 site), 1 O-linked glycan (1 site)"/>
</dbReference>
<dbReference type="iPTMnet" id="Q9Y2H6"/>
<dbReference type="PhosphoSitePlus" id="Q9Y2H6"/>
<dbReference type="SwissPalm" id="Q9Y2H6"/>
<dbReference type="BioMuta" id="FNDC3A"/>
<dbReference type="DMDM" id="254763442"/>
<dbReference type="jPOST" id="Q9Y2H6"/>
<dbReference type="MassIVE" id="Q9Y2H6"/>
<dbReference type="PaxDb" id="9606-ENSP00000441831"/>
<dbReference type="PeptideAtlas" id="Q9Y2H6"/>
<dbReference type="ProteomicsDB" id="85785">
    <molecule id="Q9Y2H6-1"/>
</dbReference>
<dbReference type="ProteomicsDB" id="85786">
    <molecule id="Q9Y2H6-2"/>
</dbReference>
<dbReference type="Pumba" id="Q9Y2H6"/>
<dbReference type="Antibodypedia" id="2293">
    <property type="antibodies" value="129 antibodies from 19 providers"/>
</dbReference>
<dbReference type="DNASU" id="22862"/>
<dbReference type="Ensembl" id="ENST00000398316.7">
    <molecule id="Q9Y2H6-2"/>
    <property type="protein sequence ID" value="ENSP00000381362.3"/>
    <property type="gene ID" value="ENSG00000102531.16"/>
</dbReference>
<dbReference type="Ensembl" id="ENST00000492622.6">
    <molecule id="Q9Y2H6-1"/>
    <property type="protein sequence ID" value="ENSP00000417257.1"/>
    <property type="gene ID" value="ENSG00000102531.16"/>
</dbReference>
<dbReference type="Ensembl" id="ENST00000541916.5">
    <molecule id="Q9Y2H6-1"/>
    <property type="protein sequence ID" value="ENSP00000441831.1"/>
    <property type="gene ID" value="ENSG00000102531.16"/>
</dbReference>
<dbReference type="GeneID" id="22862"/>
<dbReference type="KEGG" id="hsa:22862"/>
<dbReference type="MANE-Select" id="ENST00000492622.6">
    <property type="protein sequence ID" value="ENSP00000417257.1"/>
    <property type="RefSeq nucleotide sequence ID" value="NM_001079673.2"/>
    <property type="RefSeq protein sequence ID" value="NP_001073141.1"/>
</dbReference>
<dbReference type="UCSC" id="uc001vcm.3">
    <molecule id="Q9Y2H6-1"/>
    <property type="organism name" value="human"/>
</dbReference>
<dbReference type="AGR" id="HGNC:20296"/>
<dbReference type="CTD" id="22862"/>
<dbReference type="DisGeNET" id="22862"/>
<dbReference type="GeneCards" id="FNDC3A"/>
<dbReference type="HGNC" id="HGNC:20296">
    <property type="gene designation" value="FNDC3A"/>
</dbReference>
<dbReference type="HPA" id="ENSG00000102531">
    <property type="expression patterns" value="Low tissue specificity"/>
</dbReference>
<dbReference type="MIM" id="615794">
    <property type="type" value="gene"/>
</dbReference>
<dbReference type="neXtProt" id="NX_Q9Y2H6"/>
<dbReference type="OpenTargets" id="ENSG00000102531"/>
<dbReference type="PharmGKB" id="PA128394588"/>
<dbReference type="VEuPathDB" id="HostDB:ENSG00000102531"/>
<dbReference type="eggNOG" id="ENOG502QRT8">
    <property type="taxonomic scope" value="Eukaryota"/>
</dbReference>
<dbReference type="GeneTree" id="ENSGT00940000159319"/>
<dbReference type="HOGENOM" id="CLU_004152_0_0_1"/>
<dbReference type="InParanoid" id="Q9Y2H6"/>
<dbReference type="OMA" id="GETEAMC"/>
<dbReference type="OrthoDB" id="443915at2759"/>
<dbReference type="PAN-GO" id="Q9Y2H6">
    <property type="GO annotations" value="4 GO annotations based on evolutionary models"/>
</dbReference>
<dbReference type="PhylomeDB" id="Q9Y2H6"/>
<dbReference type="TreeFam" id="TF316401"/>
<dbReference type="PathwayCommons" id="Q9Y2H6"/>
<dbReference type="SignaLink" id="Q9Y2H6"/>
<dbReference type="BioGRID-ORCS" id="22862">
    <property type="hits" value="14 hits in 1157 CRISPR screens"/>
</dbReference>
<dbReference type="ChiTaRS" id="FNDC3A">
    <property type="organism name" value="human"/>
</dbReference>
<dbReference type="EvolutionaryTrace" id="Q9Y2H6"/>
<dbReference type="GeneWiki" id="FNDC3A"/>
<dbReference type="GenomeRNAi" id="22862"/>
<dbReference type="Pharos" id="Q9Y2H6">
    <property type="development level" value="Tbio"/>
</dbReference>
<dbReference type="PRO" id="PR:Q9Y2H6"/>
<dbReference type="Proteomes" id="UP000005640">
    <property type="component" value="Chromosome 13"/>
</dbReference>
<dbReference type="RNAct" id="Q9Y2H6">
    <property type="molecule type" value="protein"/>
</dbReference>
<dbReference type="Bgee" id="ENSG00000102531">
    <property type="expression patterns" value="Expressed in corpus epididymis and 210 other cell types or tissues"/>
</dbReference>
<dbReference type="ExpressionAtlas" id="Q9Y2H6">
    <property type="expression patterns" value="baseline and differential"/>
</dbReference>
<dbReference type="GO" id="GO:0001669">
    <property type="term" value="C:acrosomal vesicle"/>
    <property type="evidence" value="ECO:0007669"/>
    <property type="project" value="Ensembl"/>
</dbReference>
<dbReference type="GO" id="GO:0005737">
    <property type="term" value="C:cytoplasm"/>
    <property type="evidence" value="ECO:0000318"/>
    <property type="project" value="GO_Central"/>
</dbReference>
<dbReference type="GO" id="GO:0005829">
    <property type="term" value="C:cytosol"/>
    <property type="evidence" value="ECO:0007669"/>
    <property type="project" value="Ensembl"/>
</dbReference>
<dbReference type="GO" id="GO:0005794">
    <property type="term" value="C:Golgi apparatus"/>
    <property type="evidence" value="ECO:0000314"/>
    <property type="project" value="UniProtKB"/>
</dbReference>
<dbReference type="GO" id="GO:0000139">
    <property type="term" value="C:Golgi membrane"/>
    <property type="evidence" value="ECO:0007669"/>
    <property type="project" value="UniProtKB-SubCell"/>
</dbReference>
<dbReference type="GO" id="GO:0043231">
    <property type="term" value="C:intracellular membrane-bounded organelle"/>
    <property type="evidence" value="ECO:0000318"/>
    <property type="project" value="GO_Central"/>
</dbReference>
<dbReference type="GO" id="GO:0016020">
    <property type="term" value="C:membrane"/>
    <property type="evidence" value="ECO:0007005"/>
    <property type="project" value="UniProtKB"/>
</dbReference>
<dbReference type="GO" id="GO:0012506">
    <property type="term" value="C:vesicle membrane"/>
    <property type="evidence" value="ECO:0007669"/>
    <property type="project" value="Ensembl"/>
</dbReference>
<dbReference type="GO" id="GO:0003723">
    <property type="term" value="F:RNA binding"/>
    <property type="evidence" value="ECO:0007005"/>
    <property type="project" value="UniProtKB"/>
</dbReference>
<dbReference type="GO" id="GO:0098609">
    <property type="term" value="P:cell-cell adhesion"/>
    <property type="evidence" value="ECO:0007669"/>
    <property type="project" value="Ensembl"/>
</dbReference>
<dbReference type="GO" id="GO:0009566">
    <property type="term" value="P:fertilization"/>
    <property type="evidence" value="ECO:0007669"/>
    <property type="project" value="Ensembl"/>
</dbReference>
<dbReference type="GO" id="GO:0060009">
    <property type="term" value="P:Sertoli cell development"/>
    <property type="evidence" value="ECO:0007669"/>
    <property type="project" value="Ensembl"/>
</dbReference>
<dbReference type="GO" id="GO:0007286">
    <property type="term" value="P:spermatid development"/>
    <property type="evidence" value="ECO:0000318"/>
    <property type="project" value="GO_Central"/>
</dbReference>
<dbReference type="CDD" id="cd00063">
    <property type="entry name" value="FN3"/>
    <property type="match status" value="9"/>
</dbReference>
<dbReference type="FunFam" id="2.60.40.10:FF:000175">
    <property type="entry name" value="Fibronectin type III domain containing 3A"/>
    <property type="match status" value="1"/>
</dbReference>
<dbReference type="FunFam" id="2.60.40.10:FF:000180">
    <property type="entry name" value="Fibronectin type III domain containing 3A"/>
    <property type="match status" value="1"/>
</dbReference>
<dbReference type="FunFam" id="2.60.40.10:FF:000185">
    <property type="entry name" value="Fibronectin type III domain containing 3A"/>
    <property type="match status" value="1"/>
</dbReference>
<dbReference type="FunFam" id="2.60.40.10:FF:000195">
    <property type="entry name" value="Fibronectin type III domain containing 3A"/>
    <property type="match status" value="1"/>
</dbReference>
<dbReference type="FunFam" id="2.60.40.10:FF:000210">
    <property type="entry name" value="Fibronectin type III domain containing 3A"/>
    <property type="match status" value="1"/>
</dbReference>
<dbReference type="FunFam" id="2.60.40.10:FF:000309">
    <property type="entry name" value="Fibronectin type III domain containing 3B"/>
    <property type="match status" value="1"/>
</dbReference>
<dbReference type="FunFam" id="2.60.40.10:FF:000366">
    <property type="entry name" value="fibronectin type-III domain-containing protein 3A isoform X1"/>
    <property type="match status" value="1"/>
</dbReference>
<dbReference type="FunFam" id="2.60.40.10:FF:000373">
    <property type="entry name" value="fibronectin type-III domain-containing protein 3A isoform X1"/>
    <property type="match status" value="1"/>
</dbReference>
<dbReference type="FunFam" id="2.60.40.10:FF:000337">
    <property type="entry name" value="fibronectin type-III domain-containing protein 3A isoform X2"/>
    <property type="match status" value="1"/>
</dbReference>
<dbReference type="Gene3D" id="2.60.40.10">
    <property type="entry name" value="Immunoglobulins"/>
    <property type="match status" value="9"/>
</dbReference>
<dbReference type="InterPro" id="IPR050617">
    <property type="entry name" value="E3_ligase_FN3/SPRY"/>
</dbReference>
<dbReference type="InterPro" id="IPR003961">
    <property type="entry name" value="FN3_dom"/>
</dbReference>
<dbReference type="InterPro" id="IPR036116">
    <property type="entry name" value="FN3_sf"/>
</dbReference>
<dbReference type="InterPro" id="IPR013783">
    <property type="entry name" value="Ig-like_fold"/>
</dbReference>
<dbReference type="PANTHER" id="PTHR24099">
    <property type="entry name" value="E3 UBIQUITIN-PROTEIN LIGASE TRIM36-RELATED"/>
    <property type="match status" value="1"/>
</dbReference>
<dbReference type="PANTHER" id="PTHR24099:SF14">
    <property type="entry name" value="FIBRONECTIN TYPE III DOMAIN CONTAINING 3C2-RELATED"/>
    <property type="match status" value="1"/>
</dbReference>
<dbReference type="Pfam" id="PF00041">
    <property type="entry name" value="fn3"/>
    <property type="match status" value="8"/>
</dbReference>
<dbReference type="PRINTS" id="PR00014">
    <property type="entry name" value="FNTYPEIII"/>
</dbReference>
<dbReference type="SMART" id="SM00060">
    <property type="entry name" value="FN3"/>
    <property type="match status" value="9"/>
</dbReference>
<dbReference type="SUPFAM" id="SSF49265">
    <property type="entry name" value="Fibronectin type III"/>
    <property type="match status" value="6"/>
</dbReference>
<dbReference type="PROSITE" id="PS50853">
    <property type="entry name" value="FN3"/>
    <property type="match status" value="9"/>
</dbReference>
<accession>Q9Y2H6</accession>
<accession>B4DYG1</accession>
<accession>Q5HYC9</accession>
<accession>Q5JVF8</accession>
<accession>Q5JVF9</accession>
<accession>Q6EVH3</accession>
<accession>Q6EVH4</accession>
<accession>Q6N020</accession>
<accession>Q6P9D5</accession>
<accession>Q6ZME4</accession>
<accession>Q9H1W1</accession>
<sequence>MAEHPPLLDTTQILSSDISLLSAPIVSADGTQQVILVQVNPGEAFTIRREDGQFQCITGPAQVPMMSPNGSVPPIYVPPGYAPQVIEDNGVRRVVVVPQAPEFHPGSHTVLHRSPHPPLPGFIPVPTMMPPPPRHMYSPVTGAGDMTTQYMPQYQSSQVYGDVDAHSTHGRSNFRDERSSKTYERLQKKLKDRQGTQKDKMSSPPSSPQKCPSPINEHNGLIKGQIAGGINTGSAKIKSGKGKGGTQVDTEIEEKDEETKAFEALLSNIVKPVASDIQARTVVLTWSPPSSLINGETDESSVPELYGYEVLISSTGKDGKYKSVYVGEETNITLNDLKPAMDYHAKVQAEYNSIKGTPSEAEIFTTLSCEPDIPNPPRIANRTKNSLTLQWKAPSDNGSKIQNFVLEWDEGKGNGEFCQCYMGSQKQFKITKLSPAMGCKFRLSARNDYGTSGFSEEVLYYTSGCAPSMPASPVLTKAGITWLSLQWSKPSGTPSDEGISYILEMEEETSGYGFKPKYDGEDLAYTVKNLRRSTKYKFKVIAYNSEGKSNPSEVVEFTTCPDKPGIPVKPSVKGKIHSHSFKITWDPPKDNGGATINKYVVEMAEGSNGNKWEMIYSGATREHLCDRLNPGCFYRLRVYCISDGGQSAVSESLLVQTPAVPPGPCLPPRLQGRPKAKEIQLRWGPPLVDGGSPISCYSVEMSPIEKDEPREVYQGSEVECTVSSLLPGKTYSFRLRAANKMGFGPFSEKCDITTAPGPPDQCKPPQVTCRSATCAQVNWEVPLSNGTDVTEYRLEWGGVEGSMQICYCGPGLSYEIKGLSPATTYYCRVQALSVVGAGPFSEVVACVTPPSVPGIVTCLQEISDDEIENPHYSPSTCLAISWEKPCDHGSEILAYSIDFGDKQSLTVGKVTSYIINNLQPDTTYRIRIQALNSLGAGPFSHMIKLKTKPLPPDPPRLECVAFSHQNLKLKWGEGTPKTLSTDSIQYHLQMEDKNGRFVSLYRGPCHTYKVQRLNESTSYKFCIQACNEAGEGPLSQEYIFTTPKSVPAALKAPKIEKVNDHICEITWECLQPMKGDPVIYSLQVMLGKDSEFKQIYKGPDSSFRYSSLQLNCEYRFRVCAIRQCQDSLGHQDLVGPYSTTVLFISQRTEPPASTNRDTVESTRTRRALSDEQCAAVILVLFAFFSILIAFIIQYFVIK</sequence>
<organism>
    <name type="scientific">Homo sapiens</name>
    <name type="common">Human</name>
    <dbReference type="NCBI Taxonomy" id="9606"/>
    <lineage>
        <taxon>Eukaryota</taxon>
        <taxon>Metazoa</taxon>
        <taxon>Chordata</taxon>
        <taxon>Craniata</taxon>
        <taxon>Vertebrata</taxon>
        <taxon>Euteleostomi</taxon>
        <taxon>Mammalia</taxon>
        <taxon>Eutheria</taxon>
        <taxon>Euarchontoglires</taxon>
        <taxon>Primates</taxon>
        <taxon>Haplorrhini</taxon>
        <taxon>Catarrhini</taxon>
        <taxon>Hominidae</taxon>
        <taxon>Homo</taxon>
    </lineage>
</organism>
<feature type="chain" id="PRO_0000087321" description="Fibronectin type-III domain-containing protein 3A">
    <location>
        <begin position="1"/>
        <end position="1198"/>
    </location>
</feature>
<feature type="transmembrane region" description="Helical" evidence="3">
    <location>
        <begin position="1177"/>
        <end position="1197"/>
    </location>
</feature>
<feature type="domain" description="Fibronectin type-III 1" evidence="4">
    <location>
        <begin position="268"/>
        <end position="369"/>
    </location>
</feature>
<feature type="domain" description="Fibronectin type-III 2" evidence="4">
    <location>
        <begin position="373"/>
        <end position="465"/>
    </location>
</feature>
<feature type="domain" description="Fibronectin type-III 3" evidence="4">
    <location>
        <begin position="469"/>
        <end position="562"/>
    </location>
</feature>
<feature type="domain" description="Fibronectin type-III 4" evidence="4">
    <location>
        <begin position="566"/>
        <end position="660"/>
    </location>
</feature>
<feature type="domain" description="Fibronectin type-III 5" evidence="4">
    <location>
        <begin position="664"/>
        <end position="757"/>
    </location>
</feature>
<feature type="domain" description="Fibronectin type-III 6" evidence="4">
    <location>
        <begin position="761"/>
        <end position="851"/>
    </location>
</feature>
<feature type="domain" description="Fibronectin type-III 7" evidence="4">
    <location>
        <begin position="861"/>
        <end position="950"/>
    </location>
</feature>
<feature type="domain" description="Fibronectin type-III 8" evidence="4">
    <location>
        <begin position="951"/>
        <end position="1045"/>
    </location>
</feature>
<feature type="domain" description="Fibronectin type-III 9" evidence="4">
    <location>
        <begin position="1046"/>
        <end position="1151"/>
    </location>
</feature>
<feature type="region of interest" description="Disordered" evidence="5">
    <location>
        <begin position="160"/>
        <end position="221"/>
    </location>
</feature>
<feature type="compositionally biased region" description="Basic and acidic residues" evidence="5">
    <location>
        <begin position="163"/>
        <end position="201"/>
    </location>
</feature>
<feature type="compositionally biased region" description="Low complexity" evidence="5">
    <location>
        <begin position="202"/>
        <end position="214"/>
    </location>
</feature>
<feature type="modified residue" description="Phosphoserine" evidence="15 16">
    <location>
        <position position="203"/>
    </location>
</feature>
<feature type="modified residue" description="Phosphoserine" evidence="2">
    <location>
        <position position="207"/>
    </location>
</feature>
<feature type="modified residue" description="Phosphoserine" evidence="12 13 15">
    <location>
        <position position="213"/>
    </location>
</feature>
<feature type="modified residue" description="N6-acetyllysine" evidence="14">
    <location>
        <position position="384"/>
    </location>
</feature>
<feature type="splice variant" id="VSP_037723" description="In isoform 2." evidence="7 8 9 10">
    <location>
        <begin position="1"/>
        <end position="56"/>
    </location>
</feature>
<feature type="splice variant" id="VSP_037724" description="In isoform 2." evidence="7 8 9 10">
    <original>IT</original>
    <variation>MS</variation>
    <location>
        <begin position="57"/>
        <end position="58"/>
    </location>
</feature>
<feature type="sequence variant" id="VAR_059655" description="In dbSNP:rs34539036.">
    <original>S</original>
    <variation>G</variation>
    <location>
        <position position="107"/>
    </location>
</feature>
<feature type="sequence conflict" description="In Ref. 5; CAI45989." evidence="11" ref="5">
    <original>Q</original>
    <variation>R</variation>
    <location>
        <position position="53"/>
    </location>
</feature>
<feature type="sequence conflict" description="In Ref. 5; CAE45852." evidence="11" ref="5">
    <original>E</original>
    <variation>G</variation>
    <location>
        <position position="350"/>
    </location>
</feature>
<feature type="sequence conflict" description="In Ref. 5; CAE45852." evidence="11" ref="5">
    <original>Y</original>
    <variation>H</variation>
    <location>
        <position position="501"/>
    </location>
</feature>
<feature type="sequence conflict" description="In Ref. 8; AAH60816/AAH70072." evidence="11" ref="8">
    <original>P</original>
    <variation>R</variation>
    <location>
        <position position="839"/>
    </location>
</feature>
<feature type="helix" evidence="17">
    <location>
        <begin position="256"/>
        <end position="265"/>
    </location>
</feature>
<feature type="strand" evidence="17">
    <location>
        <begin position="273"/>
        <end position="276"/>
    </location>
</feature>
<feature type="strand" evidence="17">
    <location>
        <begin position="282"/>
        <end position="285"/>
    </location>
</feature>
<feature type="strand" evidence="17">
    <location>
        <begin position="307"/>
        <end position="312"/>
    </location>
</feature>
<feature type="strand" evidence="17">
    <location>
        <begin position="322"/>
        <end position="328"/>
    </location>
</feature>
<feature type="strand" evidence="17">
    <location>
        <begin position="330"/>
        <end position="334"/>
    </location>
</feature>
<feature type="strand" evidence="17">
    <location>
        <begin position="345"/>
        <end position="351"/>
    </location>
</feature>
<feature type="strand" evidence="17">
    <location>
        <begin position="369"/>
        <end position="371"/>
    </location>
</feature>
<feature type="strand" evidence="18">
    <location>
        <begin position="378"/>
        <end position="383"/>
    </location>
</feature>
<feature type="strand" evidence="18">
    <location>
        <begin position="386"/>
        <end position="390"/>
    </location>
</feature>
<feature type="strand" evidence="18">
    <location>
        <begin position="401"/>
        <end position="408"/>
    </location>
</feature>
<feature type="turn" evidence="18">
    <location>
        <begin position="410"/>
        <end position="412"/>
    </location>
</feature>
<feature type="strand" evidence="18">
    <location>
        <begin position="413"/>
        <end position="415"/>
    </location>
</feature>
<feature type="strand" evidence="18">
    <location>
        <begin position="418"/>
        <end position="424"/>
    </location>
</feature>
<feature type="strand" evidence="18">
    <location>
        <begin position="426"/>
        <end position="432"/>
    </location>
</feature>
<feature type="strand" evidence="18">
    <location>
        <begin position="438"/>
        <end position="442"/>
    </location>
</feature>
<feature type="strand" evidence="18">
    <location>
        <begin position="445"/>
        <end position="449"/>
    </location>
</feature>
<feature type="strand" evidence="18">
    <location>
        <begin position="458"/>
        <end position="461"/>
    </location>
</feature>
<feature type="strand" evidence="20">
    <location>
        <begin position="474"/>
        <end position="478"/>
    </location>
</feature>
<feature type="strand" evidence="20">
    <location>
        <begin position="480"/>
        <end position="486"/>
    </location>
</feature>
<feature type="strand" evidence="20">
    <location>
        <begin position="495"/>
        <end position="498"/>
    </location>
</feature>
<feature type="strand" evidence="20">
    <location>
        <begin position="500"/>
        <end position="505"/>
    </location>
</feature>
<feature type="strand" evidence="20">
    <location>
        <begin position="508"/>
        <end position="511"/>
    </location>
</feature>
<feature type="strand" evidence="20">
    <location>
        <begin position="515"/>
        <end position="521"/>
    </location>
</feature>
<feature type="strand" evidence="20">
    <location>
        <begin position="523"/>
        <end position="529"/>
    </location>
</feature>
<feature type="strand" evidence="20">
    <location>
        <begin position="535"/>
        <end position="543"/>
    </location>
</feature>
<feature type="strand" evidence="20">
    <location>
        <begin position="548"/>
        <end position="551"/>
    </location>
</feature>
<feature type="strand" evidence="20">
    <location>
        <begin position="555"/>
        <end position="558"/>
    </location>
</feature>
<feature type="strand" evidence="21">
    <location>
        <begin position="571"/>
        <end position="577"/>
    </location>
</feature>
<feature type="strand" evidence="21">
    <location>
        <begin position="580"/>
        <end position="584"/>
    </location>
</feature>
<feature type="strand" evidence="21">
    <location>
        <begin position="598"/>
        <end position="609"/>
    </location>
</feature>
<feature type="strand" evidence="21">
    <location>
        <begin position="613"/>
        <end position="616"/>
    </location>
</feature>
<feature type="strand" evidence="21">
    <location>
        <begin position="621"/>
        <end position="625"/>
    </location>
</feature>
<feature type="strand" evidence="21">
    <location>
        <begin position="634"/>
        <end position="642"/>
    </location>
</feature>
<feature type="strand" evidence="22">
    <location>
        <begin position="676"/>
        <end position="682"/>
    </location>
</feature>
<feature type="strand" evidence="22">
    <location>
        <begin position="696"/>
        <end position="702"/>
    </location>
</feature>
<feature type="strand" evidence="22">
    <location>
        <begin position="710"/>
        <end position="716"/>
    </location>
</feature>
<feature type="strand" evidence="22">
    <location>
        <begin position="718"/>
        <end position="724"/>
    </location>
</feature>
<feature type="strand" evidence="22">
    <location>
        <begin position="730"/>
        <end position="733"/>
    </location>
</feature>
<feature type="strand" evidence="22">
    <location>
        <begin position="736"/>
        <end position="738"/>
    </location>
</feature>
<feature type="strand" evidence="22">
    <location>
        <begin position="750"/>
        <end position="753"/>
    </location>
</feature>
<feature type="strand" evidence="19">
    <location>
        <begin position="768"/>
        <end position="771"/>
    </location>
</feature>
<feature type="strand" evidence="19">
    <location>
        <begin position="774"/>
        <end position="778"/>
    </location>
</feature>
<feature type="strand" evidence="19">
    <location>
        <begin position="785"/>
        <end position="787"/>
    </location>
</feature>
<feature type="strand" evidence="19">
    <location>
        <begin position="791"/>
        <end position="799"/>
    </location>
</feature>
<feature type="strand" evidence="19">
    <location>
        <begin position="805"/>
        <end position="810"/>
    </location>
</feature>
<feature type="strand" evidence="19">
    <location>
        <begin position="812"/>
        <end position="818"/>
    </location>
</feature>
<feature type="strand" evidence="19">
    <location>
        <begin position="824"/>
        <end position="832"/>
    </location>
</feature>
<feature type="strand" evidence="19">
    <location>
        <begin position="844"/>
        <end position="847"/>
    </location>
</feature>
<reference key="1">
    <citation type="journal article" date="2008" name="J. Dent. Res.">
        <title>HUGO (FNDC3A): a new gene overexpressed in human odontoblasts.</title>
        <authorList>
            <person name="Carrouel F."/>
            <person name="Couble M.-L."/>
            <person name="Vanbelle C."/>
            <person name="Staquet M.-J."/>
            <person name="Magloire H."/>
            <person name="Bleicher F."/>
        </authorList>
    </citation>
    <scope>NUCLEOTIDE SEQUENCE [MRNA] (ISOFORMS 1 AND 2)</scope>
    <scope>ALTERNATIVE PROMOTER USAGE</scope>
    <scope>SUBCELLULAR LOCATION</scope>
    <scope>TISSUE SPECIFICITY</scope>
    <source>
        <tissue>Dental pulp</tissue>
        <tissue>Odontoblast</tissue>
    </source>
</reference>
<reference key="2">
    <citation type="journal article" date="1999" name="DNA Res.">
        <title>Prediction of the coding sequences of unidentified human genes. XIII. The complete sequences of 100 new cDNA clones from brain which code for large proteins in vitro.</title>
        <authorList>
            <person name="Nagase T."/>
            <person name="Ishikawa K."/>
            <person name="Suyama M."/>
            <person name="Kikuno R."/>
            <person name="Hirosawa M."/>
            <person name="Miyajima N."/>
            <person name="Tanaka A."/>
            <person name="Kotani H."/>
            <person name="Nomura N."/>
            <person name="Ohara O."/>
        </authorList>
    </citation>
    <scope>NUCLEOTIDE SEQUENCE [LARGE SCALE MRNA] (ISOFORM 2)</scope>
    <source>
        <tissue>Brain</tissue>
    </source>
</reference>
<reference key="3">
    <citation type="journal article" date="2002" name="DNA Res.">
        <title>Construction of expression-ready cDNA clones for KIAA genes: manual curation of 330 KIAA cDNA clones.</title>
        <authorList>
            <person name="Nakajima D."/>
            <person name="Okazaki N."/>
            <person name="Yamakawa H."/>
            <person name="Kikuno R."/>
            <person name="Ohara O."/>
            <person name="Nagase T."/>
        </authorList>
    </citation>
    <scope>SEQUENCE REVISION</scope>
</reference>
<reference key="4">
    <citation type="journal article" date="2004" name="Nat. Genet.">
        <title>Complete sequencing and characterization of 21,243 full-length human cDNAs.</title>
        <authorList>
            <person name="Ota T."/>
            <person name="Suzuki Y."/>
            <person name="Nishikawa T."/>
            <person name="Otsuki T."/>
            <person name="Sugiyama T."/>
            <person name="Irie R."/>
            <person name="Wakamatsu A."/>
            <person name="Hayashi K."/>
            <person name="Sato H."/>
            <person name="Nagai K."/>
            <person name="Kimura K."/>
            <person name="Makita H."/>
            <person name="Sekine M."/>
            <person name="Obayashi M."/>
            <person name="Nishi T."/>
            <person name="Shibahara T."/>
            <person name="Tanaka T."/>
            <person name="Ishii S."/>
            <person name="Yamamoto J."/>
            <person name="Saito K."/>
            <person name="Kawai Y."/>
            <person name="Isono Y."/>
            <person name="Nakamura Y."/>
            <person name="Nagahari K."/>
            <person name="Murakami K."/>
            <person name="Yasuda T."/>
            <person name="Iwayanagi T."/>
            <person name="Wagatsuma M."/>
            <person name="Shiratori A."/>
            <person name="Sudo H."/>
            <person name="Hosoiri T."/>
            <person name="Kaku Y."/>
            <person name="Kodaira H."/>
            <person name="Kondo H."/>
            <person name="Sugawara M."/>
            <person name="Takahashi M."/>
            <person name="Kanda K."/>
            <person name="Yokoi T."/>
            <person name="Furuya T."/>
            <person name="Kikkawa E."/>
            <person name="Omura Y."/>
            <person name="Abe K."/>
            <person name="Kamihara K."/>
            <person name="Katsuta N."/>
            <person name="Sato K."/>
            <person name="Tanikawa M."/>
            <person name="Yamazaki M."/>
            <person name="Ninomiya K."/>
            <person name="Ishibashi T."/>
            <person name="Yamashita H."/>
            <person name="Murakawa K."/>
            <person name="Fujimori K."/>
            <person name="Tanai H."/>
            <person name="Kimata M."/>
            <person name="Watanabe M."/>
            <person name="Hiraoka S."/>
            <person name="Chiba Y."/>
            <person name="Ishida S."/>
            <person name="Ono Y."/>
            <person name="Takiguchi S."/>
            <person name="Watanabe S."/>
            <person name="Yosida M."/>
            <person name="Hotuta T."/>
            <person name="Kusano J."/>
            <person name="Kanehori K."/>
            <person name="Takahashi-Fujii A."/>
            <person name="Hara H."/>
            <person name="Tanase T.-O."/>
            <person name="Nomura Y."/>
            <person name="Togiya S."/>
            <person name="Komai F."/>
            <person name="Hara R."/>
            <person name="Takeuchi K."/>
            <person name="Arita M."/>
            <person name="Imose N."/>
            <person name="Musashino K."/>
            <person name="Yuuki H."/>
            <person name="Oshima A."/>
            <person name="Sasaki N."/>
            <person name="Aotsuka S."/>
            <person name="Yoshikawa Y."/>
            <person name="Matsunawa H."/>
            <person name="Ichihara T."/>
            <person name="Shiohata N."/>
            <person name="Sano S."/>
            <person name="Moriya S."/>
            <person name="Momiyama H."/>
            <person name="Satoh N."/>
            <person name="Takami S."/>
            <person name="Terashima Y."/>
            <person name="Suzuki O."/>
            <person name="Nakagawa S."/>
            <person name="Senoh A."/>
            <person name="Mizoguchi H."/>
            <person name="Goto Y."/>
            <person name="Shimizu F."/>
            <person name="Wakebe H."/>
            <person name="Hishigaki H."/>
            <person name="Watanabe T."/>
            <person name="Sugiyama A."/>
            <person name="Takemoto M."/>
            <person name="Kawakami B."/>
            <person name="Yamazaki M."/>
            <person name="Watanabe K."/>
            <person name="Kumagai A."/>
            <person name="Itakura S."/>
            <person name="Fukuzumi Y."/>
            <person name="Fujimori Y."/>
            <person name="Komiyama M."/>
            <person name="Tashiro H."/>
            <person name="Tanigami A."/>
            <person name="Fujiwara T."/>
            <person name="Ono T."/>
            <person name="Yamada K."/>
            <person name="Fujii Y."/>
            <person name="Ozaki K."/>
            <person name="Hirao M."/>
            <person name="Ohmori Y."/>
            <person name="Kawabata A."/>
            <person name="Hikiji T."/>
            <person name="Kobatake N."/>
            <person name="Inagaki H."/>
            <person name="Ikema Y."/>
            <person name="Okamoto S."/>
            <person name="Okitani R."/>
            <person name="Kawakami T."/>
            <person name="Noguchi S."/>
            <person name="Itoh T."/>
            <person name="Shigeta K."/>
            <person name="Senba T."/>
            <person name="Matsumura K."/>
            <person name="Nakajima Y."/>
            <person name="Mizuno T."/>
            <person name="Morinaga M."/>
            <person name="Sasaki M."/>
            <person name="Togashi T."/>
            <person name="Oyama M."/>
            <person name="Hata H."/>
            <person name="Watanabe M."/>
            <person name="Komatsu T."/>
            <person name="Mizushima-Sugano J."/>
            <person name="Satoh T."/>
            <person name="Shirai Y."/>
            <person name="Takahashi Y."/>
            <person name="Nakagawa K."/>
            <person name="Okumura K."/>
            <person name="Nagase T."/>
            <person name="Nomura N."/>
            <person name="Kikuchi H."/>
            <person name="Masuho Y."/>
            <person name="Yamashita R."/>
            <person name="Nakai K."/>
            <person name="Yada T."/>
            <person name="Nakamura Y."/>
            <person name="Ohara O."/>
            <person name="Isogai T."/>
            <person name="Sugano S."/>
        </authorList>
    </citation>
    <scope>NUCLEOTIDE SEQUENCE [LARGE SCALE MRNA] (ISOFORM 2)</scope>
    <source>
        <tissue>Testis</tissue>
    </source>
</reference>
<reference key="5">
    <citation type="journal article" date="2007" name="BMC Genomics">
        <title>The full-ORF clone resource of the German cDNA consortium.</title>
        <authorList>
            <person name="Bechtel S."/>
            <person name="Rosenfelder H."/>
            <person name="Duda A."/>
            <person name="Schmidt C.P."/>
            <person name="Ernst U."/>
            <person name="Wellenreuther R."/>
            <person name="Mehrle A."/>
            <person name="Schuster C."/>
            <person name="Bahr A."/>
            <person name="Bloecker H."/>
            <person name="Heubner D."/>
            <person name="Hoerlein A."/>
            <person name="Michel G."/>
            <person name="Wedler H."/>
            <person name="Koehrer K."/>
            <person name="Ottenwaelder B."/>
            <person name="Poustka A."/>
            <person name="Wiemann S."/>
            <person name="Schupp I."/>
        </authorList>
    </citation>
    <scope>NUCLEOTIDE SEQUENCE [LARGE SCALE MRNA] (ISOFORMS 1 AND 2)</scope>
    <source>
        <tissue>Cervix</tissue>
        <tissue>Fetal kidney</tissue>
    </source>
</reference>
<reference key="6">
    <citation type="journal article" date="2004" name="Nature">
        <title>The DNA sequence and analysis of human chromosome 13.</title>
        <authorList>
            <person name="Dunham A."/>
            <person name="Matthews L.H."/>
            <person name="Burton J."/>
            <person name="Ashurst J.L."/>
            <person name="Howe K.L."/>
            <person name="Ashcroft K.J."/>
            <person name="Beare D.M."/>
            <person name="Burford D.C."/>
            <person name="Hunt S.E."/>
            <person name="Griffiths-Jones S."/>
            <person name="Jones M.C."/>
            <person name="Keenan S.J."/>
            <person name="Oliver K."/>
            <person name="Scott C.E."/>
            <person name="Ainscough R."/>
            <person name="Almeida J.P."/>
            <person name="Ambrose K.D."/>
            <person name="Andrews D.T."/>
            <person name="Ashwell R.I.S."/>
            <person name="Babbage A.K."/>
            <person name="Bagguley C.L."/>
            <person name="Bailey J."/>
            <person name="Bannerjee R."/>
            <person name="Barlow K.F."/>
            <person name="Bates K."/>
            <person name="Beasley H."/>
            <person name="Bird C.P."/>
            <person name="Bray-Allen S."/>
            <person name="Brown A.J."/>
            <person name="Brown J.Y."/>
            <person name="Burrill W."/>
            <person name="Carder C."/>
            <person name="Carter N.P."/>
            <person name="Chapman J.C."/>
            <person name="Clamp M.E."/>
            <person name="Clark S.Y."/>
            <person name="Clarke G."/>
            <person name="Clee C.M."/>
            <person name="Clegg S.C."/>
            <person name="Cobley V."/>
            <person name="Collins J.E."/>
            <person name="Corby N."/>
            <person name="Coville G.J."/>
            <person name="Deloukas P."/>
            <person name="Dhami P."/>
            <person name="Dunham I."/>
            <person name="Dunn M."/>
            <person name="Earthrowl M.E."/>
            <person name="Ellington A.G."/>
            <person name="Faulkner L."/>
            <person name="Frankish A.G."/>
            <person name="Frankland J."/>
            <person name="French L."/>
            <person name="Garner P."/>
            <person name="Garnett J."/>
            <person name="Gilbert J.G.R."/>
            <person name="Gilson C.J."/>
            <person name="Ghori J."/>
            <person name="Grafham D.V."/>
            <person name="Gribble S.M."/>
            <person name="Griffiths C."/>
            <person name="Hall R.E."/>
            <person name="Hammond S."/>
            <person name="Harley J.L."/>
            <person name="Hart E.A."/>
            <person name="Heath P.D."/>
            <person name="Howden P.J."/>
            <person name="Huckle E.J."/>
            <person name="Hunt P.J."/>
            <person name="Hunt A.R."/>
            <person name="Johnson C."/>
            <person name="Johnson D."/>
            <person name="Kay M."/>
            <person name="Kimberley A.M."/>
            <person name="King A."/>
            <person name="Laird G.K."/>
            <person name="Langford C.J."/>
            <person name="Lawlor S."/>
            <person name="Leongamornlert D.A."/>
            <person name="Lloyd D.M."/>
            <person name="Lloyd C."/>
            <person name="Loveland J.E."/>
            <person name="Lovell J."/>
            <person name="Martin S."/>
            <person name="Mashreghi-Mohammadi M."/>
            <person name="McLaren S.J."/>
            <person name="McMurray A."/>
            <person name="Milne S."/>
            <person name="Moore M.J.F."/>
            <person name="Nickerson T."/>
            <person name="Palmer S.A."/>
            <person name="Pearce A.V."/>
            <person name="Peck A.I."/>
            <person name="Pelan S."/>
            <person name="Phillimore B."/>
            <person name="Porter K.M."/>
            <person name="Rice C.M."/>
            <person name="Searle S."/>
            <person name="Sehra H.K."/>
            <person name="Shownkeen R."/>
            <person name="Skuce C.D."/>
            <person name="Smith M."/>
            <person name="Steward C.A."/>
            <person name="Sycamore N."/>
            <person name="Tester J."/>
            <person name="Thomas D.W."/>
            <person name="Tracey A."/>
            <person name="Tromans A."/>
            <person name="Tubby B."/>
            <person name="Wall M."/>
            <person name="Wallis J.M."/>
            <person name="West A.P."/>
            <person name="Whitehead S.L."/>
            <person name="Willey D.L."/>
            <person name="Wilming L."/>
            <person name="Wray P.W."/>
            <person name="Wright M.W."/>
            <person name="Young L."/>
            <person name="Coulson A."/>
            <person name="Durbin R.M."/>
            <person name="Hubbard T."/>
            <person name="Sulston J.E."/>
            <person name="Beck S."/>
            <person name="Bentley D.R."/>
            <person name="Rogers J."/>
            <person name="Ross M.T."/>
        </authorList>
    </citation>
    <scope>NUCLEOTIDE SEQUENCE [LARGE SCALE GENOMIC DNA]</scope>
</reference>
<reference key="7">
    <citation type="submission" date="2005-07" db="EMBL/GenBank/DDBJ databases">
        <authorList>
            <person name="Mural R.J."/>
            <person name="Istrail S."/>
            <person name="Sutton G.G."/>
            <person name="Florea L."/>
            <person name="Halpern A.L."/>
            <person name="Mobarry C.M."/>
            <person name="Lippert R."/>
            <person name="Walenz B."/>
            <person name="Shatkay H."/>
            <person name="Dew I."/>
            <person name="Miller J.R."/>
            <person name="Flanigan M.J."/>
            <person name="Edwards N.J."/>
            <person name="Bolanos R."/>
            <person name="Fasulo D."/>
            <person name="Halldorsson B.V."/>
            <person name="Hannenhalli S."/>
            <person name="Turner R."/>
            <person name="Yooseph S."/>
            <person name="Lu F."/>
            <person name="Nusskern D.R."/>
            <person name="Shue B.C."/>
            <person name="Zheng X.H."/>
            <person name="Zhong F."/>
            <person name="Delcher A.L."/>
            <person name="Huson D.H."/>
            <person name="Kravitz S.A."/>
            <person name="Mouchard L."/>
            <person name="Reinert K."/>
            <person name="Remington K.A."/>
            <person name="Clark A.G."/>
            <person name="Waterman M.S."/>
            <person name="Eichler E.E."/>
            <person name="Adams M.D."/>
            <person name="Hunkapiller M.W."/>
            <person name="Myers E.W."/>
            <person name="Venter J.C."/>
        </authorList>
    </citation>
    <scope>NUCLEOTIDE SEQUENCE [LARGE SCALE GENOMIC DNA]</scope>
</reference>
<reference key="8">
    <citation type="journal article" date="2004" name="Genome Res.">
        <title>The status, quality, and expansion of the NIH full-length cDNA project: the Mammalian Gene Collection (MGC).</title>
        <authorList>
            <consortium name="The MGC Project Team"/>
        </authorList>
    </citation>
    <scope>NUCLEOTIDE SEQUENCE [LARGE SCALE MRNA] (ISOFORM 1)</scope>
    <source>
        <tissue>Brain</tissue>
        <tissue>Placenta</tissue>
        <tissue>Testis</tissue>
    </source>
</reference>
<reference key="9">
    <citation type="journal article" date="2006" name="Cell">
        <title>Global, in vivo, and site-specific phosphorylation dynamics in signaling networks.</title>
        <authorList>
            <person name="Olsen J.V."/>
            <person name="Blagoev B."/>
            <person name="Gnad F."/>
            <person name="Macek B."/>
            <person name="Kumar C."/>
            <person name="Mortensen P."/>
            <person name="Mann M."/>
        </authorList>
    </citation>
    <scope>PHOSPHORYLATION [LARGE SCALE ANALYSIS] AT SER-213</scope>
    <scope>IDENTIFICATION BY MASS SPECTROMETRY [LARGE SCALE ANALYSIS]</scope>
    <source>
        <tissue>Cervix carcinoma</tissue>
    </source>
</reference>
<reference key="10">
    <citation type="journal article" date="2008" name="Proc. Natl. Acad. Sci. U.S.A.">
        <title>A quantitative atlas of mitotic phosphorylation.</title>
        <authorList>
            <person name="Dephoure N."/>
            <person name="Zhou C."/>
            <person name="Villen J."/>
            <person name="Beausoleil S.A."/>
            <person name="Bakalarski C.E."/>
            <person name="Elledge S.J."/>
            <person name="Gygi S.P."/>
        </authorList>
    </citation>
    <scope>PHOSPHORYLATION [LARGE SCALE ANALYSIS] AT SER-213</scope>
    <scope>IDENTIFICATION BY MASS SPECTROMETRY [LARGE SCALE ANALYSIS]</scope>
    <source>
        <tissue>Cervix carcinoma</tissue>
    </source>
</reference>
<reference key="11">
    <citation type="journal article" date="2009" name="Anal. Chem.">
        <title>Lys-N and trypsin cover complementary parts of the phosphoproteome in a refined SCX-based approach.</title>
        <authorList>
            <person name="Gauci S."/>
            <person name="Helbig A.O."/>
            <person name="Slijper M."/>
            <person name="Krijgsveld J."/>
            <person name="Heck A.J."/>
            <person name="Mohammed S."/>
        </authorList>
    </citation>
    <scope>IDENTIFICATION BY MASS SPECTROMETRY [LARGE SCALE ANALYSIS]</scope>
</reference>
<reference key="12">
    <citation type="journal article" date="2009" name="Science">
        <title>Lysine acetylation targets protein complexes and co-regulates major cellular functions.</title>
        <authorList>
            <person name="Choudhary C."/>
            <person name="Kumar C."/>
            <person name="Gnad F."/>
            <person name="Nielsen M.L."/>
            <person name="Rehman M."/>
            <person name="Walther T.C."/>
            <person name="Olsen J.V."/>
            <person name="Mann M."/>
        </authorList>
    </citation>
    <scope>ACETYLATION [LARGE SCALE ANALYSIS] AT LYS-384</scope>
    <scope>IDENTIFICATION BY MASS SPECTROMETRY [LARGE SCALE ANALYSIS]</scope>
</reference>
<reference key="13">
    <citation type="journal article" date="2011" name="BMC Syst. Biol.">
        <title>Initial characterization of the human central proteome.</title>
        <authorList>
            <person name="Burkard T.R."/>
            <person name="Planyavsky M."/>
            <person name="Kaupe I."/>
            <person name="Breitwieser F.P."/>
            <person name="Buerckstuemmer T."/>
            <person name="Bennett K.L."/>
            <person name="Superti-Furga G."/>
            <person name="Colinge J."/>
        </authorList>
    </citation>
    <scope>IDENTIFICATION BY MASS SPECTROMETRY [LARGE SCALE ANALYSIS]</scope>
</reference>
<reference key="14">
    <citation type="journal article" date="2013" name="J. Proteome Res.">
        <title>Toward a comprehensive characterization of a human cancer cell phosphoproteome.</title>
        <authorList>
            <person name="Zhou H."/>
            <person name="Di Palma S."/>
            <person name="Preisinger C."/>
            <person name="Peng M."/>
            <person name="Polat A.N."/>
            <person name="Heck A.J."/>
            <person name="Mohammed S."/>
        </authorList>
    </citation>
    <scope>PHOSPHORYLATION [LARGE SCALE ANALYSIS] AT SER-203 AND SER-213</scope>
    <scope>IDENTIFICATION BY MASS SPECTROMETRY [LARGE SCALE ANALYSIS]</scope>
    <source>
        <tissue>Cervix carcinoma</tissue>
        <tissue>Erythroleukemia</tissue>
    </source>
</reference>
<reference key="15">
    <citation type="journal article" date="2014" name="J. Proteomics">
        <title>An enzyme assisted RP-RPLC approach for in-depth analysis of human liver phosphoproteome.</title>
        <authorList>
            <person name="Bian Y."/>
            <person name="Song C."/>
            <person name="Cheng K."/>
            <person name="Dong M."/>
            <person name="Wang F."/>
            <person name="Huang J."/>
            <person name="Sun D."/>
            <person name="Wang L."/>
            <person name="Ye M."/>
            <person name="Zou H."/>
        </authorList>
    </citation>
    <scope>PHOSPHORYLATION [LARGE SCALE ANALYSIS] AT SER-203</scope>
    <scope>IDENTIFICATION BY MASS SPECTROMETRY [LARGE SCALE ANALYSIS]</scope>
    <source>
        <tissue>Liver</tissue>
    </source>
</reference>
<reference key="16">
    <citation type="journal article" date="2015" name="Proteomics">
        <title>N-terminome analysis of the human mitochondrial proteome.</title>
        <authorList>
            <person name="Vaca Jacome A.S."/>
            <person name="Rabilloud T."/>
            <person name="Schaeffer-Reiss C."/>
            <person name="Rompais M."/>
            <person name="Ayoub D."/>
            <person name="Lane L."/>
            <person name="Bairoch A."/>
            <person name="Van Dorsselaer A."/>
            <person name="Carapito C."/>
        </authorList>
    </citation>
    <scope>IDENTIFICATION BY MASS SPECTROMETRY [LARGE SCALE ANALYSIS]</scope>
</reference>
<reference key="17">
    <citation type="submission" date="2006-01" db="PDB data bank">
        <title>Solution structure of fibronectin type III domains derived from human KIAA0970 protein.</title>
        <authorList>
            <consortium name="RIKEN structural genomics initiative (RSGI)"/>
        </authorList>
    </citation>
    <scope>STRUCTURE BY NMR OF 256-851</scope>
</reference>
<evidence type="ECO:0000250" key="1"/>
<evidence type="ECO:0000250" key="2">
    <source>
        <dbReference type="UniProtKB" id="Q8BX90"/>
    </source>
</evidence>
<evidence type="ECO:0000255" key="3"/>
<evidence type="ECO:0000255" key="4">
    <source>
        <dbReference type="PROSITE-ProRule" id="PRU00316"/>
    </source>
</evidence>
<evidence type="ECO:0000256" key="5">
    <source>
        <dbReference type="SAM" id="MobiDB-lite"/>
    </source>
</evidence>
<evidence type="ECO:0000269" key="6">
    <source>
    </source>
</evidence>
<evidence type="ECO:0000303" key="7">
    <source>
    </source>
</evidence>
<evidence type="ECO:0000303" key="8">
    <source>
    </source>
</evidence>
<evidence type="ECO:0000303" key="9">
    <source>
    </source>
</evidence>
<evidence type="ECO:0000303" key="10">
    <source>
    </source>
</evidence>
<evidence type="ECO:0000305" key="11"/>
<evidence type="ECO:0007744" key="12">
    <source>
    </source>
</evidence>
<evidence type="ECO:0007744" key="13">
    <source>
    </source>
</evidence>
<evidence type="ECO:0007744" key="14">
    <source>
    </source>
</evidence>
<evidence type="ECO:0007744" key="15">
    <source>
    </source>
</evidence>
<evidence type="ECO:0007744" key="16">
    <source>
    </source>
</evidence>
<evidence type="ECO:0007829" key="17">
    <source>
        <dbReference type="PDB" id="1WK0"/>
    </source>
</evidence>
<evidence type="ECO:0007829" key="18">
    <source>
        <dbReference type="PDB" id="1X3D"/>
    </source>
</evidence>
<evidence type="ECO:0007829" key="19">
    <source>
        <dbReference type="PDB" id="1X4X"/>
    </source>
</evidence>
<evidence type="ECO:0007829" key="20">
    <source>
        <dbReference type="PDB" id="1X5X"/>
    </source>
</evidence>
<evidence type="ECO:0007829" key="21">
    <source>
        <dbReference type="PDB" id="2CRM"/>
    </source>
</evidence>
<evidence type="ECO:0007829" key="22">
    <source>
        <dbReference type="PDB" id="2CRZ"/>
    </source>
</evidence>